<keyword id="KW-0025">Alternative splicing</keyword>
<keyword id="KW-0067">ATP-binding</keyword>
<keyword id="KW-0131">Cell cycle</keyword>
<keyword id="KW-0235">DNA replication</keyword>
<keyword id="KW-0238">DNA-binding</keyword>
<keyword id="KW-0347">Helicase</keyword>
<keyword id="KW-0945">Host-virus interaction</keyword>
<keyword id="KW-0378">Hydrolase</keyword>
<keyword id="KW-0479">Metal-binding</keyword>
<keyword id="KW-0547">Nucleotide-binding</keyword>
<keyword id="KW-0539">Nucleus</keyword>
<keyword id="KW-1185">Reference proteome</keyword>
<keyword id="KW-0862">Zinc</keyword>
<keyword id="KW-0863">Zinc-finger</keyword>
<protein>
    <recommendedName>
        <fullName>DNA replication licensing factor MCM2</fullName>
        <ecNumber>3.6.4.12</ecNumber>
    </recommendedName>
    <alternativeName>
        <fullName>Minichromosome maintenance protein 2</fullName>
        <shortName>AtMCM2</shortName>
    </alternativeName>
</protein>
<evidence type="ECO:0000250" key="1"/>
<evidence type="ECO:0000255" key="2"/>
<evidence type="ECO:0000256" key="3">
    <source>
        <dbReference type="SAM" id="MobiDB-lite"/>
    </source>
</evidence>
<evidence type="ECO:0000269" key="4">
    <source>
    </source>
</evidence>
<evidence type="ECO:0000269" key="5">
    <source>
    </source>
</evidence>
<evidence type="ECO:0000269" key="6">
    <source>
    </source>
</evidence>
<evidence type="ECO:0000269" key="7">
    <source>
    </source>
</evidence>
<evidence type="ECO:0000305" key="8"/>
<evidence type="ECO:0000305" key="9">
    <source>
    </source>
</evidence>
<reference key="1">
    <citation type="journal article" date="2000" name="Nature">
        <title>Sequence and analysis of chromosome 1 of the plant Arabidopsis thaliana.</title>
        <authorList>
            <person name="Theologis A."/>
            <person name="Ecker J.R."/>
            <person name="Palm C.J."/>
            <person name="Federspiel N.A."/>
            <person name="Kaul S."/>
            <person name="White O."/>
            <person name="Alonso J."/>
            <person name="Altafi H."/>
            <person name="Araujo R."/>
            <person name="Bowman C.L."/>
            <person name="Brooks S.Y."/>
            <person name="Buehler E."/>
            <person name="Chan A."/>
            <person name="Chao Q."/>
            <person name="Chen H."/>
            <person name="Cheuk R.F."/>
            <person name="Chin C.W."/>
            <person name="Chung M.K."/>
            <person name="Conn L."/>
            <person name="Conway A.B."/>
            <person name="Conway A.R."/>
            <person name="Creasy T.H."/>
            <person name="Dewar K."/>
            <person name="Dunn P."/>
            <person name="Etgu P."/>
            <person name="Feldblyum T.V."/>
            <person name="Feng J.-D."/>
            <person name="Fong B."/>
            <person name="Fujii C.Y."/>
            <person name="Gill J.E."/>
            <person name="Goldsmith A.D."/>
            <person name="Haas B."/>
            <person name="Hansen N.F."/>
            <person name="Hughes B."/>
            <person name="Huizar L."/>
            <person name="Hunter J.L."/>
            <person name="Jenkins J."/>
            <person name="Johnson-Hopson C."/>
            <person name="Khan S."/>
            <person name="Khaykin E."/>
            <person name="Kim C.J."/>
            <person name="Koo H.L."/>
            <person name="Kremenetskaia I."/>
            <person name="Kurtz D.B."/>
            <person name="Kwan A."/>
            <person name="Lam B."/>
            <person name="Langin-Hooper S."/>
            <person name="Lee A."/>
            <person name="Lee J.M."/>
            <person name="Lenz C.A."/>
            <person name="Li J.H."/>
            <person name="Li Y.-P."/>
            <person name="Lin X."/>
            <person name="Liu S.X."/>
            <person name="Liu Z.A."/>
            <person name="Luros J.S."/>
            <person name="Maiti R."/>
            <person name="Marziali A."/>
            <person name="Militscher J."/>
            <person name="Miranda M."/>
            <person name="Nguyen M."/>
            <person name="Nierman W.C."/>
            <person name="Osborne B.I."/>
            <person name="Pai G."/>
            <person name="Peterson J."/>
            <person name="Pham P.K."/>
            <person name="Rizzo M."/>
            <person name="Rooney T."/>
            <person name="Rowley D."/>
            <person name="Sakano H."/>
            <person name="Salzberg S.L."/>
            <person name="Schwartz J.R."/>
            <person name="Shinn P."/>
            <person name="Southwick A.M."/>
            <person name="Sun H."/>
            <person name="Tallon L.J."/>
            <person name="Tambunga G."/>
            <person name="Toriumi M.J."/>
            <person name="Town C.D."/>
            <person name="Utterback T."/>
            <person name="Van Aken S."/>
            <person name="Vaysberg M."/>
            <person name="Vysotskaia V.S."/>
            <person name="Walker M."/>
            <person name="Wu D."/>
            <person name="Yu G."/>
            <person name="Fraser C.M."/>
            <person name="Venter J.C."/>
            <person name="Davis R.W."/>
        </authorList>
    </citation>
    <scope>NUCLEOTIDE SEQUENCE [LARGE SCALE GENOMIC DNA]</scope>
    <source>
        <strain>cv. Columbia</strain>
    </source>
</reference>
<reference key="2">
    <citation type="journal article" date="2017" name="Plant J.">
        <title>Araport11: a complete reannotation of the Arabidopsis thaliana reference genome.</title>
        <authorList>
            <person name="Cheng C.Y."/>
            <person name="Krishnakumar V."/>
            <person name="Chan A.P."/>
            <person name="Thibaud-Nissen F."/>
            <person name="Schobel S."/>
            <person name="Town C.D."/>
        </authorList>
    </citation>
    <scope>GENOME REANNOTATION</scope>
    <source>
        <strain>cv. Columbia</strain>
    </source>
</reference>
<reference key="3">
    <citation type="submission" date="2006-07" db="EMBL/GenBank/DDBJ databases">
        <title>Large-scale analysis of RIKEN Arabidopsis full-length (RAFL) cDNAs.</title>
        <authorList>
            <person name="Totoki Y."/>
            <person name="Seki M."/>
            <person name="Ishida J."/>
            <person name="Nakajima M."/>
            <person name="Enju A."/>
            <person name="Kamiya A."/>
            <person name="Narusaka M."/>
            <person name="Shin-i T."/>
            <person name="Nakagawa M."/>
            <person name="Sakamoto N."/>
            <person name="Oishi K."/>
            <person name="Kohara Y."/>
            <person name="Kobayashi M."/>
            <person name="Toyoda A."/>
            <person name="Sakaki Y."/>
            <person name="Sakurai T."/>
            <person name="Iida K."/>
            <person name="Akiyama K."/>
            <person name="Satou M."/>
            <person name="Toyoda T."/>
            <person name="Konagaya A."/>
            <person name="Carninci P."/>
            <person name="Kawai J."/>
            <person name="Hayashizaki Y."/>
            <person name="Shinozaki K."/>
        </authorList>
    </citation>
    <scope>NUCLEOTIDE SEQUENCE [LARGE SCALE MRNA]</scope>
    <source>
        <strain>cv. Columbia</strain>
    </source>
</reference>
<reference key="4">
    <citation type="submission" date="1996-08" db="EMBL/GenBank/DDBJ databases">
        <title>A.thaliana mRNA for MCM2-related protein.</title>
        <authorList>
            <person name="Callard P."/>
            <person name="Axelos M."/>
        </authorList>
    </citation>
    <scope>NUCLEOTIDE SEQUENCE [MRNA] OF 446-936</scope>
    <source>
        <strain>cv. Columbia</strain>
    </source>
</reference>
<reference key="5">
    <citation type="journal article" date="2007" name="Plant Physiol.">
        <title>Genome-wide analysis of the core DNA replication machinery in the higher plants Arabidopsis and rice.</title>
        <authorList>
            <person name="Shultz R.W."/>
            <person name="Tatineni V.M."/>
            <person name="Hanley-Bowdoin L."/>
            <person name="Thompson W.F."/>
        </authorList>
    </citation>
    <scope>GENE FAMILY</scope>
</reference>
<reference key="6">
    <citation type="journal article" date="2008" name="EMBO J.">
        <title>The DNA replication checkpoint aids survival of plants deficient in the novel replisome factor ETG1.</title>
        <authorList>
            <person name="Takahashi N."/>
            <person name="Lammens T."/>
            <person name="Boudolf V."/>
            <person name="Maes S."/>
            <person name="Yoshizumi T."/>
            <person name="De Jaeger G."/>
            <person name="Witters E."/>
            <person name="Inze D."/>
            <person name="De Veylder L."/>
        </authorList>
    </citation>
    <scope>SUBUNIT</scope>
    <scope>INTERACTION WITH ETG1</scope>
</reference>
<reference key="7">
    <citation type="journal article" date="2009" name="New Phytol.">
        <title>The Arabidopsis MCM2 gene is essential to embryo development and its over-expression alters root meristem function.</title>
        <authorList>
            <person name="Ni D.A."/>
            <person name="Sozzani R."/>
            <person name="Blanchet S."/>
            <person name="Domenichini S."/>
            <person name="Reuzeau C."/>
            <person name="Cella R."/>
            <person name="Bergounioux C."/>
            <person name="Raynaud C."/>
        </authorList>
    </citation>
    <scope>FUNCTION</scope>
    <scope>TISSUE SPECIFICITY</scope>
    <scope>DISRUPTION PHENOTYPE</scope>
</reference>
<reference key="8">
    <citation type="journal article" date="2009" name="Plant Physiol.">
        <title>Dynamic localization of the DNA replication proteins MCM5 and MCM7 in plants.</title>
        <authorList>
            <person name="Shultz R.W."/>
            <person name="Lee T.J."/>
            <person name="Allen G.C."/>
            <person name="Thompson W.F."/>
            <person name="Hanley-Bowdoin L."/>
        </authorList>
    </citation>
    <scope>TISSUE SPECIFICITY</scope>
</reference>
<reference key="9">
    <citation type="journal article" date="2013" name="Arch. Virol.">
        <title>Arabidopsis thaliana MCM2 plays role(s) in mungbean yellow mosaic India virus (MYMIV) DNA replication.</title>
        <authorList>
            <person name="Suyal G."/>
            <person name="Mukherjee S.K."/>
            <person name="Srivastava P.S."/>
            <person name="Choudhury N.R."/>
        </authorList>
    </citation>
    <scope>FUNCTION</scope>
    <scope>INTERACTION WITH THE GEMINIVIRUS MUNGBEAN YELLOW MOSAIC VIRUS (MYMV) REPLICATION INITIATOR PROTEIN</scope>
</reference>
<proteinExistence type="evidence at protein level"/>
<gene>
    <name type="primary">MCM2</name>
    <name type="ordered locus">At1g44900</name>
    <name type="ORF">T12C22.19</name>
</gene>
<feature type="chain" id="PRO_0000425986" description="DNA replication licensing factor MCM2">
    <location>
        <begin position="1"/>
        <end position="936"/>
    </location>
</feature>
<feature type="domain" description="MCM">
    <location>
        <begin position="499"/>
        <end position="705"/>
    </location>
</feature>
<feature type="zinc finger region" description="C4-type" evidence="2">
    <location>
        <begin position="355"/>
        <end position="381"/>
    </location>
</feature>
<feature type="region of interest" description="Disordered" evidence="3">
    <location>
        <begin position="1"/>
        <end position="105"/>
    </location>
</feature>
<feature type="region of interest" description="Disordered" evidence="3">
    <location>
        <begin position="126"/>
        <end position="190"/>
    </location>
</feature>
<feature type="region of interest" description="Disordered" evidence="3">
    <location>
        <begin position="711"/>
        <end position="739"/>
    </location>
</feature>
<feature type="short sequence motif" description="Arginine finger">
    <location>
        <begin position="681"/>
        <end position="684"/>
    </location>
</feature>
<feature type="compositionally biased region" description="Low complexity" evidence="3">
    <location>
        <begin position="10"/>
        <end position="19"/>
    </location>
</feature>
<feature type="compositionally biased region" description="Polar residues" evidence="3">
    <location>
        <begin position="20"/>
        <end position="36"/>
    </location>
</feature>
<feature type="compositionally biased region" description="Acidic residues" evidence="3">
    <location>
        <begin position="53"/>
        <end position="69"/>
    </location>
</feature>
<feature type="compositionally biased region" description="Acidic residues" evidence="3">
    <location>
        <begin position="180"/>
        <end position="190"/>
    </location>
</feature>
<feature type="binding site" evidence="1">
    <location>
        <begin position="549"/>
        <end position="556"/>
    </location>
    <ligand>
        <name>ATP</name>
        <dbReference type="ChEBI" id="CHEBI:30616"/>
    </ligand>
</feature>
<accession>Q9LPD9</accession>
<accession>Q96275</accession>
<dbReference type="EC" id="3.6.4.12"/>
<dbReference type="EMBL" id="AC020576">
    <property type="protein sequence ID" value="AAF78275.1"/>
    <property type="molecule type" value="Genomic_DNA"/>
</dbReference>
<dbReference type="EMBL" id="CP002684">
    <property type="protein sequence ID" value="AEE32060.1"/>
    <property type="molecule type" value="Genomic_DNA"/>
</dbReference>
<dbReference type="EMBL" id="AK227536">
    <property type="status" value="NOT_ANNOTATED_CDS"/>
    <property type="molecule type" value="mRNA"/>
</dbReference>
<dbReference type="EMBL" id="Y08301">
    <property type="protein sequence ID" value="CAA69609.1"/>
    <property type="molecule type" value="mRNA"/>
</dbReference>
<dbReference type="PIR" id="E96508">
    <property type="entry name" value="E96508"/>
</dbReference>
<dbReference type="RefSeq" id="NP_175112.2">
    <molecule id="Q9LPD9-1"/>
    <property type="nucleotide sequence ID" value="NM_103572.5"/>
</dbReference>
<dbReference type="SMR" id="Q9LPD9"/>
<dbReference type="BioGRID" id="26281">
    <property type="interactions" value="3"/>
</dbReference>
<dbReference type="FunCoup" id="Q9LPD9">
    <property type="interactions" value="3204"/>
</dbReference>
<dbReference type="IntAct" id="Q9LPD9">
    <property type="interactions" value="2"/>
</dbReference>
<dbReference type="MINT" id="Q9LPD9"/>
<dbReference type="STRING" id="3702.Q9LPD9"/>
<dbReference type="iPTMnet" id="Q9LPD9"/>
<dbReference type="PaxDb" id="3702-AT1G44900.1"/>
<dbReference type="ProteomicsDB" id="238850">
    <molecule id="Q9LPD9-1"/>
</dbReference>
<dbReference type="EnsemblPlants" id="AT1G44900.1">
    <molecule id="Q9LPD9-1"/>
    <property type="protein sequence ID" value="AT1G44900.1"/>
    <property type="gene ID" value="AT1G44900"/>
</dbReference>
<dbReference type="GeneID" id="841056"/>
<dbReference type="Gramene" id="AT1G44900.1">
    <molecule id="Q9LPD9-1"/>
    <property type="protein sequence ID" value="AT1G44900.1"/>
    <property type="gene ID" value="AT1G44900"/>
</dbReference>
<dbReference type="KEGG" id="ath:AT1G44900"/>
<dbReference type="Araport" id="AT1G44900"/>
<dbReference type="TAIR" id="AT1G44900">
    <property type="gene designation" value="MCM2"/>
</dbReference>
<dbReference type="eggNOG" id="KOG0477">
    <property type="taxonomic scope" value="Eukaryota"/>
</dbReference>
<dbReference type="InParanoid" id="Q9LPD9"/>
<dbReference type="PhylomeDB" id="Q9LPD9"/>
<dbReference type="CD-CODE" id="4299E36E">
    <property type="entry name" value="Nucleolus"/>
</dbReference>
<dbReference type="PRO" id="PR:Q9LPD9"/>
<dbReference type="Proteomes" id="UP000006548">
    <property type="component" value="Chromosome 1"/>
</dbReference>
<dbReference type="ExpressionAtlas" id="Q9LPD9">
    <property type="expression patterns" value="baseline and differential"/>
</dbReference>
<dbReference type="GO" id="GO:0042555">
    <property type="term" value="C:MCM complex"/>
    <property type="evidence" value="ECO:0007669"/>
    <property type="project" value="InterPro"/>
</dbReference>
<dbReference type="GO" id="GO:0000347">
    <property type="term" value="C:THO complex"/>
    <property type="evidence" value="ECO:0000314"/>
    <property type="project" value="UniProtKB"/>
</dbReference>
<dbReference type="GO" id="GO:0005524">
    <property type="term" value="F:ATP binding"/>
    <property type="evidence" value="ECO:0007669"/>
    <property type="project" value="UniProtKB-KW"/>
</dbReference>
<dbReference type="GO" id="GO:0016887">
    <property type="term" value="F:ATP hydrolysis activity"/>
    <property type="evidence" value="ECO:0007669"/>
    <property type="project" value="RHEA"/>
</dbReference>
<dbReference type="GO" id="GO:0003677">
    <property type="term" value="F:DNA binding"/>
    <property type="evidence" value="ECO:0007669"/>
    <property type="project" value="UniProtKB-KW"/>
</dbReference>
<dbReference type="GO" id="GO:0004386">
    <property type="term" value="F:helicase activity"/>
    <property type="evidence" value="ECO:0007669"/>
    <property type="project" value="UniProtKB-KW"/>
</dbReference>
<dbReference type="GO" id="GO:0008270">
    <property type="term" value="F:zinc ion binding"/>
    <property type="evidence" value="ECO:0007669"/>
    <property type="project" value="UniProtKB-KW"/>
</dbReference>
<dbReference type="GO" id="GO:0044786">
    <property type="term" value="P:cell cycle DNA replication"/>
    <property type="evidence" value="ECO:0007669"/>
    <property type="project" value="EnsemblPlants"/>
</dbReference>
<dbReference type="GO" id="GO:0006270">
    <property type="term" value="P:DNA replication initiation"/>
    <property type="evidence" value="ECO:0007669"/>
    <property type="project" value="InterPro"/>
</dbReference>
<dbReference type="GO" id="GO:0009793">
    <property type="term" value="P:embryo development ending in seed dormancy"/>
    <property type="evidence" value="ECO:0000315"/>
    <property type="project" value="TAIR"/>
</dbReference>
<dbReference type="GO" id="GO:0042127">
    <property type="term" value="P:regulation of cell population proliferation"/>
    <property type="evidence" value="ECO:0000315"/>
    <property type="project" value="TAIR"/>
</dbReference>
<dbReference type="GO" id="GO:0010082">
    <property type="term" value="P:regulation of root meristem growth"/>
    <property type="evidence" value="ECO:0000315"/>
    <property type="project" value="TAIR"/>
</dbReference>
<dbReference type="GO" id="GO:0048364">
    <property type="term" value="P:root development"/>
    <property type="evidence" value="ECO:0000315"/>
    <property type="project" value="TAIR"/>
</dbReference>
<dbReference type="CDD" id="cd17753">
    <property type="entry name" value="MCM2"/>
    <property type="match status" value="1"/>
</dbReference>
<dbReference type="FunFam" id="2.20.28.10:FF:000002">
    <property type="entry name" value="DNA helicase"/>
    <property type="match status" value="1"/>
</dbReference>
<dbReference type="FunFam" id="3.30.1640.10:FF:000008">
    <property type="entry name" value="DNA helicase"/>
    <property type="match status" value="1"/>
</dbReference>
<dbReference type="FunFam" id="3.40.50.300:FF:000138">
    <property type="entry name" value="DNA helicase"/>
    <property type="match status" value="1"/>
</dbReference>
<dbReference type="Gene3D" id="2.20.28.10">
    <property type="match status" value="1"/>
</dbReference>
<dbReference type="Gene3D" id="3.30.1640.10">
    <property type="entry name" value="mini-chromosome maintenance (MCM) complex, chain A, domain 1"/>
    <property type="match status" value="1"/>
</dbReference>
<dbReference type="Gene3D" id="2.40.50.140">
    <property type="entry name" value="Nucleic acid-binding proteins"/>
    <property type="match status" value="1"/>
</dbReference>
<dbReference type="Gene3D" id="3.40.50.300">
    <property type="entry name" value="P-loop containing nucleotide triphosphate hydrolases"/>
    <property type="match status" value="1"/>
</dbReference>
<dbReference type="InterPro" id="IPR031327">
    <property type="entry name" value="MCM"/>
</dbReference>
<dbReference type="InterPro" id="IPR008045">
    <property type="entry name" value="MCM2"/>
</dbReference>
<dbReference type="InterPro" id="IPR018525">
    <property type="entry name" value="MCM_CS"/>
</dbReference>
<dbReference type="InterPro" id="IPR001208">
    <property type="entry name" value="MCM_dom"/>
</dbReference>
<dbReference type="InterPro" id="IPR041562">
    <property type="entry name" value="MCM_lid"/>
</dbReference>
<dbReference type="InterPro" id="IPR027925">
    <property type="entry name" value="MCM_N"/>
</dbReference>
<dbReference type="InterPro" id="IPR033762">
    <property type="entry name" value="MCM_OB"/>
</dbReference>
<dbReference type="InterPro" id="IPR012340">
    <property type="entry name" value="NA-bd_OB-fold"/>
</dbReference>
<dbReference type="InterPro" id="IPR027417">
    <property type="entry name" value="P-loop_NTPase"/>
</dbReference>
<dbReference type="PANTHER" id="PTHR11630">
    <property type="entry name" value="DNA REPLICATION LICENSING FACTOR MCM FAMILY MEMBER"/>
    <property type="match status" value="1"/>
</dbReference>
<dbReference type="PANTHER" id="PTHR11630:SF44">
    <property type="entry name" value="DNA REPLICATION LICENSING FACTOR MCM2"/>
    <property type="match status" value="1"/>
</dbReference>
<dbReference type="Pfam" id="PF00493">
    <property type="entry name" value="MCM"/>
    <property type="match status" value="1"/>
</dbReference>
<dbReference type="Pfam" id="PF12619">
    <property type="entry name" value="MCM2_N"/>
    <property type="match status" value="1"/>
</dbReference>
<dbReference type="Pfam" id="PF17855">
    <property type="entry name" value="MCM_lid"/>
    <property type="match status" value="1"/>
</dbReference>
<dbReference type="Pfam" id="PF14551">
    <property type="entry name" value="MCM_N"/>
    <property type="match status" value="1"/>
</dbReference>
<dbReference type="Pfam" id="PF17207">
    <property type="entry name" value="MCM_OB"/>
    <property type="match status" value="1"/>
</dbReference>
<dbReference type="Pfam" id="PF23669">
    <property type="entry name" value="WH_MCM2"/>
    <property type="match status" value="1"/>
</dbReference>
<dbReference type="PRINTS" id="PR01657">
    <property type="entry name" value="MCMFAMILY"/>
</dbReference>
<dbReference type="PRINTS" id="PR01658">
    <property type="entry name" value="MCMPROTEIN2"/>
</dbReference>
<dbReference type="SMART" id="SM00350">
    <property type="entry name" value="MCM"/>
    <property type="match status" value="1"/>
</dbReference>
<dbReference type="SUPFAM" id="SSF50249">
    <property type="entry name" value="Nucleic acid-binding proteins"/>
    <property type="match status" value="1"/>
</dbReference>
<dbReference type="SUPFAM" id="SSF52540">
    <property type="entry name" value="P-loop containing nucleoside triphosphate hydrolases"/>
    <property type="match status" value="1"/>
</dbReference>
<dbReference type="PROSITE" id="PS00847">
    <property type="entry name" value="MCM_1"/>
    <property type="match status" value="1"/>
</dbReference>
<dbReference type="PROSITE" id="PS50051">
    <property type="entry name" value="MCM_2"/>
    <property type="match status" value="1"/>
</dbReference>
<name>MCM2_ARATH</name>
<sequence>MAGENSDNEPSSPASPSSAGFNTDQLPISTSQNSENFSDEEEAAVDTQVIRDEPDEAEDEEEEEGEDLFNDTFMNDYRKMDENDQYESNGIDDSVDDERDLGQAMLDRRAADADLDARENRLANRKLPHLLHDNDSDDWNYRPSKRSRTTVPPRGNGGDPDGNPPSSPGVSQPDISMTDQTDDYQDEDDNDDEAEFEMYRIQGTLREWVMRDEVRRFIAKKFKDFLLTYVKPKNENGDIEYVRLINEMVSANKCSLEIDYKEFIHVHPNIAIWLADAPQPVLEVMEEVSEKVIFDLHPNYKNIHTKIYVRVTNLPVNDQIRNIRQIHLNTMIRIGGVVTRRSGVFPQLQQVKYDCNKCGAVLGPFFQNSYSEVKVGSCSECQSKGPFTVNVEQTIYRNYQKLTIQESPGTVPAGRLPRHKEVILLNDLIDCARPGEEIEVTGIYTNNFDLSLNTKNGFPVFATVVEANYVTKKQDLFSAYKLTQEDKTQIEELSKDPRIVERIIKSIAPSIYGHEDIKTALALAMFGGQEKNIKGKHRLRGDINVLLLGDPGTAKSQFLKYVEKTGQRAVYTTGKGASAVGLTAAVHKDPVTREWTLEGGALVLADRGICLIDEFDKMNDQDRVSIHEAMEQQSISISKAGIVTSLQARCSVIAAANPVGGRYDSSKSFAQNVELTDPILSRFDILCVVKDVVDPVTDEMLAEFVVNSHFKSQPKGGKMEDSDPEDGIQGSSGSTDPEVLPQNLLKKYLTYSKLYVFPKLGELDAKKLETVYANLRRESMNGQGVSIATRHLESMIRMSEAHARMHLRQYVTEEDVNMAIRVLLDSFISTQKFGVQRTLRESFKRYITYKKDFNSLLLVLLKELVKNALKFEEIISGSNSGLPTIEVKIEELQTKAKEYDIADLRPFFSSTDFSKAHFELDHGRGMIKCPKRLITW</sequence>
<comment type="function">
    <text evidence="6 7">Probable component of the MCM2-7 complex (MCM complex) that may function as a DNA helicase and which is essential to undergo a single round of replication initiation and elongation per cell cycle in eukaryotic cells. May play a crucial role in the control of de-differentiation and cell proliferation processes required for lateral root formation. Is essential for embryo development. Is involved in the geminivirus mungbean yellow mosaic virus (MYMV) DNA replication, presumably in conjunction with other host factors.</text>
</comment>
<comment type="catalytic activity">
    <reaction>
        <text>ATP + H2O = ADP + phosphate + H(+)</text>
        <dbReference type="Rhea" id="RHEA:13065"/>
        <dbReference type="ChEBI" id="CHEBI:15377"/>
        <dbReference type="ChEBI" id="CHEBI:15378"/>
        <dbReference type="ChEBI" id="CHEBI:30616"/>
        <dbReference type="ChEBI" id="CHEBI:43474"/>
        <dbReference type="ChEBI" id="CHEBI:456216"/>
        <dbReference type="EC" id="3.6.4.12"/>
    </reaction>
</comment>
<comment type="subunit">
    <text evidence="4 7">Component of the minichromosome maintenance (MCM) complex, a heterotetramer composed of MCM2, MCM3, MCM4, MCM5, MCM6 and MCM7. Interacts with ETG1 and the replication-associated protein of the geminivirus mungbean yellow mosaic virus (MYMV).</text>
</comment>
<comment type="subcellular location">
    <subcellularLocation>
        <location evidence="8">Nucleus</location>
    </subcellularLocation>
</comment>
<comment type="alternative products">
    <event type="alternative splicing"/>
    <isoform>
        <id>Q9LPD9-1</id>
        <name>1</name>
        <sequence type="displayed"/>
    </isoform>
    <text>A number of isoforms are produced. According to EST sequences.</text>
</comment>
<comment type="tissue specificity">
    <text evidence="5 6">Expressed in root apical meristem, lateral root meristem primordia, leaf primordia, shoot apical meristem and flower buds.</text>
</comment>
<comment type="disruption phenotype">
    <text evidence="6">Embryonic lethality when homozygous.</text>
</comment>
<comment type="miscellaneous">
    <text evidence="9">Over-expression of MCM2 strongly reduces plant and cell sizes and inhibits endoreduplication.</text>
</comment>
<comment type="similarity">
    <text evidence="8">Belongs to the MCM family.</text>
</comment>
<comment type="sequence caution" evidence="8">
    <conflict type="miscellaneous discrepancy">
        <sequence resource="EMBL" id="AK227536"/>
    </conflict>
    <text>Sequencing errors.</text>
</comment>
<organism>
    <name type="scientific">Arabidopsis thaliana</name>
    <name type="common">Mouse-ear cress</name>
    <dbReference type="NCBI Taxonomy" id="3702"/>
    <lineage>
        <taxon>Eukaryota</taxon>
        <taxon>Viridiplantae</taxon>
        <taxon>Streptophyta</taxon>
        <taxon>Embryophyta</taxon>
        <taxon>Tracheophyta</taxon>
        <taxon>Spermatophyta</taxon>
        <taxon>Magnoliopsida</taxon>
        <taxon>eudicotyledons</taxon>
        <taxon>Gunneridae</taxon>
        <taxon>Pentapetalae</taxon>
        <taxon>rosids</taxon>
        <taxon>malvids</taxon>
        <taxon>Brassicales</taxon>
        <taxon>Brassicaceae</taxon>
        <taxon>Camelineae</taxon>
        <taxon>Arabidopsis</taxon>
    </lineage>
</organism>